<comment type="function">
    <text evidence="2">Part of TspanC8 subgroup, composed of 6 members that interact with the transmembrane metalloprotease ADAM10. This interaction is required for ADAM10 exit from the endoplasmic reticulum and for enzymatic maturation and trafficking to the cell surface as well as substrate specificity. Different TspanC8/ADAM10 complexes have distinct substrates.</text>
</comment>
<comment type="subunit">
    <text evidence="2">Homodimer; disulfide-linked.</text>
</comment>
<comment type="subcellular location">
    <subcellularLocation>
        <location evidence="2">Cell membrane</location>
        <topology evidence="2">Multi-pass membrane protein</topology>
    </subcellularLocation>
    <subcellularLocation>
        <location evidence="2">Cell junction</location>
        <location evidence="2">Adherens junction</location>
    </subcellularLocation>
    <subcellularLocation>
        <location evidence="2">Cytoplasm</location>
    </subcellularLocation>
</comment>
<comment type="alternative products">
    <event type="alternative splicing"/>
    <isoform>
        <id>Q5RH71-1</id>
        <name>1</name>
        <sequence type="displayed"/>
    </isoform>
    <isoform>
        <id>Q5RH71-2</id>
        <name>2</name>
        <sequence type="described" ref="VSP_024251"/>
    </isoform>
</comment>
<comment type="similarity">
    <text evidence="5">Belongs to the tetraspanin (TM4SF) family.</text>
</comment>
<organism>
    <name type="scientific">Danio rerio</name>
    <name type="common">Zebrafish</name>
    <name type="synonym">Brachydanio rerio</name>
    <dbReference type="NCBI Taxonomy" id="7955"/>
    <lineage>
        <taxon>Eukaryota</taxon>
        <taxon>Metazoa</taxon>
        <taxon>Chordata</taxon>
        <taxon>Craniata</taxon>
        <taxon>Vertebrata</taxon>
        <taxon>Euteleostomi</taxon>
        <taxon>Actinopterygii</taxon>
        <taxon>Neopterygii</taxon>
        <taxon>Teleostei</taxon>
        <taxon>Ostariophysi</taxon>
        <taxon>Cypriniformes</taxon>
        <taxon>Danionidae</taxon>
        <taxon>Danioninae</taxon>
        <taxon>Danio</taxon>
    </lineage>
</organism>
<name>TSN33_DANRE</name>
<dbReference type="EMBL" id="BX571796">
    <property type="protein sequence ID" value="CAI20758.1"/>
    <property type="molecule type" value="Genomic_DNA"/>
</dbReference>
<dbReference type="EMBL" id="BC075972">
    <property type="protein sequence ID" value="AAH75972.1"/>
    <property type="molecule type" value="mRNA"/>
</dbReference>
<dbReference type="RefSeq" id="NP_001002617.2">
    <molecule id="Q5RH71-1"/>
    <property type="nucleotide sequence ID" value="NM_001002617.2"/>
</dbReference>
<dbReference type="RefSeq" id="NP_001315511.1">
    <molecule id="Q5RH71-2"/>
    <property type="nucleotide sequence ID" value="NM_001328582.1"/>
</dbReference>
<dbReference type="SMR" id="Q5RH71"/>
<dbReference type="FunCoup" id="Q5RH71">
    <property type="interactions" value="121"/>
</dbReference>
<dbReference type="STRING" id="7955.ENSDARP00000007865"/>
<dbReference type="GlyCosmos" id="Q5RH71">
    <property type="glycosylation" value="1 site, No reported glycans"/>
</dbReference>
<dbReference type="PaxDb" id="7955-ENSDARP00000007865"/>
<dbReference type="Ensembl" id="ENSDART00000002770">
    <molecule id="Q5RH71-1"/>
    <property type="protein sequence ID" value="ENSDARP00000007865"/>
    <property type="gene ID" value="ENSDARG00000004497"/>
</dbReference>
<dbReference type="GeneID" id="436890"/>
<dbReference type="KEGG" id="dre:436890"/>
<dbReference type="AGR" id="ZFIN:ZDB-GENE-040718-361"/>
<dbReference type="CTD" id="436890"/>
<dbReference type="ZFIN" id="ZDB-GENE-040718-361">
    <property type="gene designation" value="tspan33a"/>
</dbReference>
<dbReference type="eggNOG" id="KOG3882">
    <property type="taxonomic scope" value="Eukaryota"/>
</dbReference>
<dbReference type="HOGENOM" id="CLU_055524_0_3_1"/>
<dbReference type="InParanoid" id="Q5RH71"/>
<dbReference type="OMA" id="IQTYRED"/>
<dbReference type="OrthoDB" id="2014092at2759"/>
<dbReference type="PhylomeDB" id="Q5RH71"/>
<dbReference type="TreeFam" id="TF313002"/>
<dbReference type="PRO" id="PR:Q5RH71"/>
<dbReference type="Proteomes" id="UP000000437">
    <property type="component" value="Chromosome 4"/>
</dbReference>
<dbReference type="Bgee" id="ENSDARG00000004497">
    <property type="expression patterns" value="Expressed in liver and 21 other cell types or tissues"/>
</dbReference>
<dbReference type="ExpressionAtlas" id="Q5RH71">
    <property type="expression patterns" value="baseline and differential"/>
</dbReference>
<dbReference type="GO" id="GO:0005912">
    <property type="term" value="C:adherens junction"/>
    <property type="evidence" value="ECO:0007669"/>
    <property type="project" value="UniProtKB-SubCell"/>
</dbReference>
<dbReference type="GO" id="GO:0005737">
    <property type="term" value="C:cytoplasm"/>
    <property type="evidence" value="ECO:0007669"/>
    <property type="project" value="UniProtKB-SubCell"/>
</dbReference>
<dbReference type="GO" id="GO:0005886">
    <property type="term" value="C:plasma membrane"/>
    <property type="evidence" value="ECO:0000318"/>
    <property type="project" value="GO_Central"/>
</dbReference>
<dbReference type="GO" id="GO:0072659">
    <property type="term" value="P:protein localization to plasma membrane"/>
    <property type="evidence" value="ECO:0000318"/>
    <property type="project" value="GO_Central"/>
</dbReference>
<dbReference type="GO" id="GO:0051604">
    <property type="term" value="P:protein maturation"/>
    <property type="evidence" value="ECO:0000318"/>
    <property type="project" value="GO_Central"/>
</dbReference>
<dbReference type="CDD" id="cd03158">
    <property type="entry name" value="penumbra_like_LEL"/>
    <property type="match status" value="1"/>
</dbReference>
<dbReference type="FunFam" id="1.10.1450.10:FF:000007">
    <property type="entry name" value="Tetraspanin"/>
    <property type="match status" value="1"/>
</dbReference>
<dbReference type="Gene3D" id="1.10.1450.10">
    <property type="entry name" value="Tetraspanin"/>
    <property type="match status" value="1"/>
</dbReference>
<dbReference type="InterPro" id="IPR018499">
    <property type="entry name" value="Tetraspanin/Peripherin"/>
</dbReference>
<dbReference type="InterPro" id="IPR000301">
    <property type="entry name" value="Tetraspanin_animals"/>
</dbReference>
<dbReference type="InterPro" id="IPR008952">
    <property type="entry name" value="Tetraspanin_EC2_sf"/>
</dbReference>
<dbReference type="PANTHER" id="PTHR19282">
    <property type="entry name" value="TETRASPANIN"/>
    <property type="match status" value="1"/>
</dbReference>
<dbReference type="PANTHER" id="PTHR19282:SF154">
    <property type="entry name" value="TETRASPANIN-33"/>
    <property type="match status" value="1"/>
</dbReference>
<dbReference type="Pfam" id="PF00335">
    <property type="entry name" value="Tetraspanin"/>
    <property type="match status" value="1"/>
</dbReference>
<dbReference type="PIRSF" id="PIRSF002419">
    <property type="entry name" value="Tetraspanin"/>
    <property type="match status" value="1"/>
</dbReference>
<dbReference type="PRINTS" id="PR00259">
    <property type="entry name" value="TMFOUR"/>
</dbReference>
<dbReference type="SUPFAM" id="SSF48652">
    <property type="entry name" value="Tetraspanin"/>
    <property type="match status" value="1"/>
</dbReference>
<accession>Q5RH71</accession>
<accession>Q6DHJ9</accession>
<gene>
    <name type="primary">tspan33</name>
    <name type="ORF">zgc:92266</name>
</gene>
<protein>
    <recommendedName>
        <fullName>Tetraspanin-33</fullName>
        <shortName>Tspan-33</shortName>
    </recommendedName>
</protein>
<sequence>MGNAKRATQNDEDYTFVSPVVKYLLFFFNMIFWIISLVLISIGVYSRIVKHETALACLTVDPALILMVVGILMFFITFCGCVGSLRENICLLQTFCIFLTIMFLLQLLAGVLGFVFSDKARGKVTDMFDNAIKHYRDDLDLQNLIDYGQKQFNCCGGISFMDWSKNMYFNCSDDNPSRERCSVPFSCCLHAKEETIINTMCGHGMQALNYLAASAFINTNGCIDILVNWIHSNLFLLGGIALGLTIPQLVGILLSQVLINQIQDQIKLQNYNQQHRSDPWS</sequence>
<reference key="1">
    <citation type="journal article" date="2013" name="Nature">
        <title>The zebrafish reference genome sequence and its relationship to the human genome.</title>
        <authorList>
            <person name="Howe K."/>
            <person name="Clark M.D."/>
            <person name="Torroja C.F."/>
            <person name="Torrance J."/>
            <person name="Berthelot C."/>
            <person name="Muffato M."/>
            <person name="Collins J.E."/>
            <person name="Humphray S."/>
            <person name="McLaren K."/>
            <person name="Matthews L."/>
            <person name="McLaren S."/>
            <person name="Sealy I."/>
            <person name="Caccamo M."/>
            <person name="Churcher C."/>
            <person name="Scott C."/>
            <person name="Barrett J.C."/>
            <person name="Koch R."/>
            <person name="Rauch G.J."/>
            <person name="White S."/>
            <person name="Chow W."/>
            <person name="Kilian B."/>
            <person name="Quintais L.T."/>
            <person name="Guerra-Assuncao J.A."/>
            <person name="Zhou Y."/>
            <person name="Gu Y."/>
            <person name="Yen J."/>
            <person name="Vogel J.H."/>
            <person name="Eyre T."/>
            <person name="Redmond S."/>
            <person name="Banerjee R."/>
            <person name="Chi J."/>
            <person name="Fu B."/>
            <person name="Langley E."/>
            <person name="Maguire S.F."/>
            <person name="Laird G.K."/>
            <person name="Lloyd D."/>
            <person name="Kenyon E."/>
            <person name="Donaldson S."/>
            <person name="Sehra H."/>
            <person name="Almeida-King J."/>
            <person name="Loveland J."/>
            <person name="Trevanion S."/>
            <person name="Jones M."/>
            <person name="Quail M."/>
            <person name="Willey D."/>
            <person name="Hunt A."/>
            <person name="Burton J."/>
            <person name="Sims S."/>
            <person name="McLay K."/>
            <person name="Plumb B."/>
            <person name="Davis J."/>
            <person name="Clee C."/>
            <person name="Oliver K."/>
            <person name="Clark R."/>
            <person name="Riddle C."/>
            <person name="Elliot D."/>
            <person name="Threadgold G."/>
            <person name="Harden G."/>
            <person name="Ware D."/>
            <person name="Begum S."/>
            <person name="Mortimore B."/>
            <person name="Kerry G."/>
            <person name="Heath P."/>
            <person name="Phillimore B."/>
            <person name="Tracey A."/>
            <person name="Corby N."/>
            <person name="Dunn M."/>
            <person name="Johnson C."/>
            <person name="Wood J."/>
            <person name="Clark S."/>
            <person name="Pelan S."/>
            <person name="Griffiths G."/>
            <person name="Smith M."/>
            <person name="Glithero R."/>
            <person name="Howden P."/>
            <person name="Barker N."/>
            <person name="Lloyd C."/>
            <person name="Stevens C."/>
            <person name="Harley J."/>
            <person name="Holt K."/>
            <person name="Panagiotidis G."/>
            <person name="Lovell J."/>
            <person name="Beasley H."/>
            <person name="Henderson C."/>
            <person name="Gordon D."/>
            <person name="Auger K."/>
            <person name="Wright D."/>
            <person name="Collins J."/>
            <person name="Raisen C."/>
            <person name="Dyer L."/>
            <person name="Leung K."/>
            <person name="Robertson L."/>
            <person name="Ambridge K."/>
            <person name="Leongamornlert D."/>
            <person name="McGuire S."/>
            <person name="Gilderthorp R."/>
            <person name="Griffiths C."/>
            <person name="Manthravadi D."/>
            <person name="Nichol S."/>
            <person name="Barker G."/>
            <person name="Whitehead S."/>
            <person name="Kay M."/>
            <person name="Brown J."/>
            <person name="Murnane C."/>
            <person name="Gray E."/>
            <person name="Humphries M."/>
            <person name="Sycamore N."/>
            <person name="Barker D."/>
            <person name="Saunders D."/>
            <person name="Wallis J."/>
            <person name="Babbage A."/>
            <person name="Hammond S."/>
            <person name="Mashreghi-Mohammadi M."/>
            <person name="Barr L."/>
            <person name="Martin S."/>
            <person name="Wray P."/>
            <person name="Ellington A."/>
            <person name="Matthews N."/>
            <person name="Ellwood M."/>
            <person name="Woodmansey R."/>
            <person name="Clark G."/>
            <person name="Cooper J."/>
            <person name="Tromans A."/>
            <person name="Grafham D."/>
            <person name="Skuce C."/>
            <person name="Pandian R."/>
            <person name="Andrews R."/>
            <person name="Harrison E."/>
            <person name="Kimberley A."/>
            <person name="Garnett J."/>
            <person name="Fosker N."/>
            <person name="Hall R."/>
            <person name="Garner P."/>
            <person name="Kelly D."/>
            <person name="Bird C."/>
            <person name="Palmer S."/>
            <person name="Gehring I."/>
            <person name="Berger A."/>
            <person name="Dooley C.M."/>
            <person name="Ersan-Urun Z."/>
            <person name="Eser C."/>
            <person name="Geiger H."/>
            <person name="Geisler M."/>
            <person name="Karotki L."/>
            <person name="Kirn A."/>
            <person name="Konantz J."/>
            <person name="Konantz M."/>
            <person name="Oberlander M."/>
            <person name="Rudolph-Geiger S."/>
            <person name="Teucke M."/>
            <person name="Lanz C."/>
            <person name="Raddatz G."/>
            <person name="Osoegawa K."/>
            <person name="Zhu B."/>
            <person name="Rapp A."/>
            <person name="Widaa S."/>
            <person name="Langford C."/>
            <person name="Yang F."/>
            <person name="Schuster S.C."/>
            <person name="Carter N.P."/>
            <person name="Harrow J."/>
            <person name="Ning Z."/>
            <person name="Herrero J."/>
            <person name="Searle S.M."/>
            <person name="Enright A."/>
            <person name="Geisler R."/>
            <person name="Plasterk R.H."/>
            <person name="Lee C."/>
            <person name="Westerfield M."/>
            <person name="de Jong P.J."/>
            <person name="Zon L.I."/>
            <person name="Postlethwait J.H."/>
            <person name="Nusslein-Volhard C."/>
            <person name="Hubbard T.J."/>
            <person name="Roest Crollius H."/>
            <person name="Rogers J."/>
            <person name="Stemple D.L."/>
        </authorList>
    </citation>
    <scope>NUCLEOTIDE SEQUENCE [LARGE SCALE GENOMIC DNA]</scope>
    <source>
        <strain>Tuebingen</strain>
    </source>
</reference>
<reference key="2">
    <citation type="submission" date="2004-07" db="EMBL/GenBank/DDBJ databases">
        <authorList>
            <consortium name="NIH - Zebrafish Gene Collection (ZGC) project"/>
        </authorList>
    </citation>
    <scope>NUCLEOTIDE SEQUENCE [LARGE SCALE MRNA] (ISOFORM 2)</scope>
</reference>
<evidence type="ECO:0000250" key="1">
    <source>
        <dbReference type="UniProtKB" id="O95858"/>
    </source>
</evidence>
<evidence type="ECO:0000250" key="2">
    <source>
        <dbReference type="UniProtKB" id="Q86UF1"/>
    </source>
</evidence>
<evidence type="ECO:0000255" key="3"/>
<evidence type="ECO:0000303" key="4">
    <source ref="2"/>
</evidence>
<evidence type="ECO:0000305" key="5"/>
<proteinExistence type="evidence at transcript level"/>
<keyword id="KW-0025">Alternative splicing</keyword>
<keyword id="KW-0965">Cell junction</keyword>
<keyword id="KW-1003">Cell membrane</keyword>
<keyword id="KW-0963">Cytoplasm</keyword>
<keyword id="KW-1015">Disulfide bond</keyword>
<keyword id="KW-0325">Glycoprotein</keyword>
<keyword id="KW-0472">Membrane</keyword>
<keyword id="KW-1185">Reference proteome</keyword>
<keyword id="KW-0812">Transmembrane</keyword>
<keyword id="KW-1133">Transmembrane helix</keyword>
<feature type="chain" id="PRO_0000282924" description="Tetraspanin-33">
    <location>
        <begin position="1"/>
        <end position="281"/>
    </location>
</feature>
<feature type="topological domain" description="Cytoplasmic" evidence="3">
    <location>
        <begin position="1"/>
        <end position="23"/>
    </location>
</feature>
<feature type="transmembrane region" description="Helical" evidence="3">
    <location>
        <begin position="24"/>
        <end position="44"/>
    </location>
</feature>
<feature type="topological domain" description="Extracellular" evidence="3">
    <location>
        <begin position="45"/>
        <end position="62"/>
    </location>
</feature>
<feature type="transmembrane region" description="Helical" evidence="3">
    <location>
        <begin position="63"/>
        <end position="83"/>
    </location>
</feature>
<feature type="topological domain" description="Cytoplasmic" evidence="3">
    <location>
        <begin position="84"/>
        <end position="94"/>
    </location>
</feature>
<feature type="transmembrane region" description="Helical" evidence="3">
    <location>
        <begin position="95"/>
        <end position="115"/>
    </location>
</feature>
<feature type="topological domain" description="Extracellular" evidence="3">
    <location>
        <begin position="116"/>
        <end position="233"/>
    </location>
</feature>
<feature type="transmembrane region" description="Helical" evidence="3">
    <location>
        <begin position="234"/>
        <end position="254"/>
    </location>
</feature>
<feature type="topological domain" description="Cytoplasmic" evidence="3">
    <location>
        <begin position="255"/>
        <end position="281"/>
    </location>
</feature>
<feature type="glycosylation site" description="N-linked (GlcNAc...) asparagine" evidence="3">
    <location>
        <position position="170"/>
    </location>
</feature>
<feature type="disulfide bond" evidence="1">
    <location>
        <begin position="154"/>
        <end position="222"/>
    </location>
</feature>
<feature type="disulfide bond" evidence="1">
    <location>
        <begin position="155"/>
        <end position="187"/>
    </location>
</feature>
<feature type="disulfide bond" evidence="1">
    <location>
        <begin position="171"/>
        <end position="181"/>
    </location>
</feature>
<feature type="disulfide bond" evidence="1">
    <location>
        <begin position="188"/>
        <end position="201"/>
    </location>
</feature>
<feature type="splice variant" id="VSP_024251" description="In isoform 2." evidence="4">
    <location>
        <begin position="1"/>
        <end position="66"/>
    </location>
</feature>